<sequence>MVREEVVGSTRALQWKCVESRADSKRLYYGRFILSPLLKGQADTIGIAMRRALLGEIEGTCITRAKSEKVPHEYSTIAGIEESVHEILMNLKEIVLRSNLYGTRDASICVRGPRCVTAQDIISPPSVEVVDTTQHIASLTEPIDLCIGLQIQRDRGYRMKTTKNSQDGSYPIDAVSMPVRNANHSIHSYGNGNQKQEILFLEIWTNGSLTPKEALHEASRNLIDLFIPFLHAEEEDINFEENQNRFTVPPFTFPDRLANLKKNKKEIALKCIFIDQSELPPRTYNCLKRSNIHTLLDLLSNSQEDLMKIEYFRIEDVKQILDTLQKHFAIDLPKNKF</sequence>
<reference key="1">
    <citation type="journal article" date="2005" name="Mol. Biol. Evol.">
        <title>Analysis of Acorus calamus chloroplast genome and its phylogenetic implications.</title>
        <authorList>
            <person name="Goremykin V.V."/>
            <person name="Holland B."/>
            <person name="Hirsch-Ernst K.I."/>
            <person name="Hellwig F.H."/>
        </authorList>
    </citation>
    <scope>NUCLEOTIDE SEQUENCE [LARGE SCALE GENOMIC DNA]</scope>
</reference>
<evidence type="ECO:0000255" key="1">
    <source>
        <dbReference type="HAMAP-Rule" id="MF_00059"/>
    </source>
</evidence>
<organism>
    <name type="scientific">Acorus calamus</name>
    <name type="common">Sweet flag</name>
    <dbReference type="NCBI Taxonomy" id="4465"/>
    <lineage>
        <taxon>Eukaryota</taxon>
        <taxon>Viridiplantae</taxon>
        <taxon>Streptophyta</taxon>
        <taxon>Embryophyta</taxon>
        <taxon>Tracheophyta</taxon>
        <taxon>Spermatophyta</taxon>
        <taxon>Magnoliopsida</taxon>
        <taxon>Liliopsida</taxon>
        <taxon>Acoraceae</taxon>
        <taxon>Acorus</taxon>
    </lineage>
</organism>
<protein>
    <recommendedName>
        <fullName evidence="1">DNA-directed RNA polymerase subunit alpha</fullName>
        <shortName evidence="1">PEP</shortName>
        <ecNumber evidence="1">2.7.7.6</ecNumber>
    </recommendedName>
    <alternativeName>
        <fullName evidence="1">Plastid-encoded RNA polymerase subunit alpha</fullName>
        <shortName evidence="1">RNA polymerase subunit alpha</shortName>
    </alternativeName>
</protein>
<accession>Q3V502</accession>
<keyword id="KW-0150">Chloroplast</keyword>
<keyword id="KW-0240">DNA-directed RNA polymerase</keyword>
<keyword id="KW-0548">Nucleotidyltransferase</keyword>
<keyword id="KW-0934">Plastid</keyword>
<keyword id="KW-0804">Transcription</keyword>
<keyword id="KW-0808">Transferase</keyword>
<comment type="function">
    <text>DNA-dependent RNA polymerase catalyzes the transcription of DNA into RNA using the four ribonucleoside triphosphates as substrates.</text>
</comment>
<comment type="catalytic activity">
    <reaction evidence="1">
        <text>RNA(n) + a ribonucleoside 5'-triphosphate = RNA(n+1) + diphosphate</text>
        <dbReference type="Rhea" id="RHEA:21248"/>
        <dbReference type="Rhea" id="RHEA-COMP:14527"/>
        <dbReference type="Rhea" id="RHEA-COMP:17342"/>
        <dbReference type="ChEBI" id="CHEBI:33019"/>
        <dbReference type="ChEBI" id="CHEBI:61557"/>
        <dbReference type="ChEBI" id="CHEBI:140395"/>
        <dbReference type="EC" id="2.7.7.6"/>
    </reaction>
</comment>
<comment type="subunit">
    <text evidence="1">In plastids the minimal PEP RNA polymerase catalytic core is composed of four subunits: alpha, beta, beta', and beta''. When a (nuclear-encoded) sigma factor is associated with the core the holoenzyme is formed, which can initiate transcription.</text>
</comment>
<comment type="subcellular location">
    <subcellularLocation>
        <location>Plastid</location>
        <location>Chloroplast</location>
    </subcellularLocation>
</comment>
<comment type="domain">
    <text evidence="1">The N-terminal domain is essential for RNAP assembly and basal transcription, whereas the C-terminal domain is involved in interaction with transcriptional regulators and with upstream promoter elements.</text>
</comment>
<comment type="similarity">
    <text evidence="1">Belongs to the RNA polymerase alpha chain family.</text>
</comment>
<feature type="chain" id="PRO_0000225917" description="DNA-directed RNA polymerase subunit alpha">
    <location>
        <begin position="1"/>
        <end position="337"/>
    </location>
</feature>
<feature type="region of interest" description="Alpha N-terminal domain (alpha-NTD)" evidence="1">
    <location>
        <begin position="1"/>
        <end position="233"/>
    </location>
</feature>
<feature type="region of interest" description="Alpha C-terminal domain (alpha-CTD)" evidence="1">
    <location>
        <begin position="265"/>
        <end position="337"/>
    </location>
</feature>
<name>RPOA_ACOCL</name>
<proteinExistence type="inferred from homology"/>
<dbReference type="EC" id="2.7.7.6" evidence="1"/>
<dbReference type="EMBL" id="AJ879453">
    <property type="protein sequence ID" value="CAI53826.1"/>
    <property type="molecule type" value="Genomic_DNA"/>
</dbReference>
<dbReference type="RefSeq" id="YP_319795.1">
    <property type="nucleotide sequence ID" value="NC_007407.1"/>
</dbReference>
<dbReference type="SMR" id="Q3V502"/>
<dbReference type="GeneID" id="3677449"/>
<dbReference type="GO" id="GO:0009507">
    <property type="term" value="C:chloroplast"/>
    <property type="evidence" value="ECO:0007669"/>
    <property type="project" value="UniProtKB-SubCell"/>
</dbReference>
<dbReference type="GO" id="GO:0000428">
    <property type="term" value="C:DNA-directed RNA polymerase complex"/>
    <property type="evidence" value="ECO:0007669"/>
    <property type="project" value="UniProtKB-KW"/>
</dbReference>
<dbReference type="GO" id="GO:0005739">
    <property type="term" value="C:mitochondrion"/>
    <property type="evidence" value="ECO:0007669"/>
    <property type="project" value="GOC"/>
</dbReference>
<dbReference type="GO" id="GO:0003677">
    <property type="term" value="F:DNA binding"/>
    <property type="evidence" value="ECO:0007669"/>
    <property type="project" value="UniProtKB-UniRule"/>
</dbReference>
<dbReference type="GO" id="GO:0003899">
    <property type="term" value="F:DNA-directed RNA polymerase activity"/>
    <property type="evidence" value="ECO:0007669"/>
    <property type="project" value="UniProtKB-UniRule"/>
</dbReference>
<dbReference type="GO" id="GO:0046983">
    <property type="term" value="F:protein dimerization activity"/>
    <property type="evidence" value="ECO:0007669"/>
    <property type="project" value="InterPro"/>
</dbReference>
<dbReference type="GO" id="GO:0006351">
    <property type="term" value="P:DNA-templated transcription"/>
    <property type="evidence" value="ECO:0007669"/>
    <property type="project" value="UniProtKB-UniRule"/>
</dbReference>
<dbReference type="CDD" id="cd06928">
    <property type="entry name" value="RNAP_alpha_NTD"/>
    <property type="match status" value="1"/>
</dbReference>
<dbReference type="FunFam" id="1.10.150.20:FF:000021">
    <property type="entry name" value="DNA-directed RNA polymerase subunit alpha"/>
    <property type="match status" value="1"/>
</dbReference>
<dbReference type="FunFam" id="2.170.120.12:FF:000001">
    <property type="entry name" value="DNA-directed RNA polymerase subunit alpha"/>
    <property type="match status" value="1"/>
</dbReference>
<dbReference type="FunFam" id="3.30.1360.10:FF:000039">
    <property type="entry name" value="DNA-directed RNA polymerase subunit alpha"/>
    <property type="match status" value="1"/>
</dbReference>
<dbReference type="Gene3D" id="1.10.150.20">
    <property type="entry name" value="5' to 3' exonuclease, C-terminal subdomain"/>
    <property type="match status" value="1"/>
</dbReference>
<dbReference type="Gene3D" id="2.170.120.12">
    <property type="entry name" value="DNA-directed RNA polymerase, insert domain"/>
    <property type="match status" value="1"/>
</dbReference>
<dbReference type="Gene3D" id="3.30.1360.10">
    <property type="entry name" value="RNA polymerase, RBP11-like subunit"/>
    <property type="match status" value="1"/>
</dbReference>
<dbReference type="HAMAP" id="MF_00059">
    <property type="entry name" value="RNApol_bact_RpoA"/>
    <property type="match status" value="1"/>
</dbReference>
<dbReference type="InterPro" id="IPR011262">
    <property type="entry name" value="DNA-dir_RNA_pol_insert"/>
</dbReference>
<dbReference type="InterPro" id="IPR011263">
    <property type="entry name" value="DNA-dir_RNA_pol_RpoA/D/Rpb3"/>
</dbReference>
<dbReference type="InterPro" id="IPR011773">
    <property type="entry name" value="DNA-dir_RpoA"/>
</dbReference>
<dbReference type="InterPro" id="IPR036603">
    <property type="entry name" value="RBP11-like"/>
</dbReference>
<dbReference type="InterPro" id="IPR011260">
    <property type="entry name" value="RNAP_asu_C"/>
</dbReference>
<dbReference type="InterPro" id="IPR036643">
    <property type="entry name" value="RNApol_insert_sf"/>
</dbReference>
<dbReference type="NCBIfam" id="TIGR02027">
    <property type="entry name" value="rpoA"/>
    <property type="match status" value="1"/>
</dbReference>
<dbReference type="Pfam" id="PF01000">
    <property type="entry name" value="RNA_pol_A_bac"/>
    <property type="match status" value="1"/>
</dbReference>
<dbReference type="Pfam" id="PF03118">
    <property type="entry name" value="RNA_pol_A_CTD"/>
    <property type="match status" value="1"/>
</dbReference>
<dbReference type="Pfam" id="PF01193">
    <property type="entry name" value="RNA_pol_L"/>
    <property type="match status" value="1"/>
</dbReference>
<dbReference type="SMART" id="SM00662">
    <property type="entry name" value="RPOLD"/>
    <property type="match status" value="1"/>
</dbReference>
<dbReference type="SUPFAM" id="SSF47789">
    <property type="entry name" value="C-terminal domain of RNA polymerase alpha subunit"/>
    <property type="match status" value="1"/>
</dbReference>
<dbReference type="SUPFAM" id="SSF56553">
    <property type="entry name" value="Insert subdomain of RNA polymerase alpha subunit"/>
    <property type="match status" value="1"/>
</dbReference>
<dbReference type="SUPFAM" id="SSF55257">
    <property type="entry name" value="RBP11-like subunits of RNA polymerase"/>
    <property type="match status" value="1"/>
</dbReference>
<geneLocation type="chloroplast"/>
<gene>
    <name evidence="1" type="primary">rpoA</name>
</gene>